<keyword id="KW-0012">Acyltransferase</keyword>
<keyword id="KW-0028">Amino-acid biosynthesis</keyword>
<keyword id="KW-0220">Diaminopimelate biosynthesis</keyword>
<keyword id="KW-0457">Lysine biosynthesis</keyword>
<keyword id="KW-1185">Reference proteome</keyword>
<keyword id="KW-0677">Repeat</keyword>
<keyword id="KW-0808">Transferase</keyword>
<dbReference type="EC" id="2.3.1.89" evidence="1"/>
<dbReference type="EMBL" id="BA000016">
    <property type="protein sequence ID" value="BAB81615.1"/>
    <property type="molecule type" value="Genomic_DNA"/>
</dbReference>
<dbReference type="SMR" id="Q8XJ52"/>
<dbReference type="STRING" id="195102.gene:10491178"/>
<dbReference type="KEGG" id="cpe:CPE1909"/>
<dbReference type="HOGENOM" id="CLU_103751_0_0_9"/>
<dbReference type="UniPathway" id="UPA00034">
    <property type="reaction ID" value="UER00022"/>
</dbReference>
<dbReference type="Proteomes" id="UP000000818">
    <property type="component" value="Chromosome"/>
</dbReference>
<dbReference type="GO" id="GO:0047200">
    <property type="term" value="F:tetrahydrodipicolinate N-acetyltransferase activity"/>
    <property type="evidence" value="ECO:0007669"/>
    <property type="project" value="UniProtKB-EC"/>
</dbReference>
<dbReference type="GO" id="GO:0019877">
    <property type="term" value="P:diaminopimelate biosynthetic process"/>
    <property type="evidence" value="ECO:0007669"/>
    <property type="project" value="UniProtKB-UniRule"/>
</dbReference>
<dbReference type="GO" id="GO:0009089">
    <property type="term" value="P:lysine biosynthetic process via diaminopimelate"/>
    <property type="evidence" value="ECO:0007669"/>
    <property type="project" value="UniProtKB-UniRule"/>
</dbReference>
<dbReference type="CDD" id="cd03350">
    <property type="entry name" value="LbH_THP_succinylT"/>
    <property type="match status" value="1"/>
</dbReference>
<dbReference type="Gene3D" id="2.160.10.10">
    <property type="entry name" value="Hexapeptide repeat proteins"/>
    <property type="match status" value="1"/>
</dbReference>
<dbReference type="Gene3D" id="3.30.70.250">
    <property type="entry name" value="Malonyl-CoA ACP transacylase, ACP-binding"/>
    <property type="match status" value="1"/>
</dbReference>
<dbReference type="HAMAP" id="MF_01691">
    <property type="entry name" value="DapH"/>
    <property type="match status" value="1"/>
</dbReference>
<dbReference type="InterPro" id="IPR019873">
    <property type="entry name" value="DapH"/>
</dbReference>
<dbReference type="InterPro" id="IPR013710">
    <property type="entry name" value="DapH_N"/>
</dbReference>
<dbReference type="InterPro" id="IPR001451">
    <property type="entry name" value="Hexapep"/>
</dbReference>
<dbReference type="InterPro" id="IPR018357">
    <property type="entry name" value="Hexapep_transf_CS"/>
</dbReference>
<dbReference type="InterPro" id="IPR050179">
    <property type="entry name" value="Trans_hexapeptide_repeat"/>
</dbReference>
<dbReference type="InterPro" id="IPR011004">
    <property type="entry name" value="Trimer_LpxA-like_sf"/>
</dbReference>
<dbReference type="NCBIfam" id="TIGR03532">
    <property type="entry name" value="DapD_Ac"/>
    <property type="match status" value="1"/>
</dbReference>
<dbReference type="PANTHER" id="PTHR43300:SF10">
    <property type="entry name" value="2,3,4,5-TETRAHYDROPYRIDINE-2,6-DICARBOXYLATE N-ACETYLTRANSFERASE"/>
    <property type="match status" value="1"/>
</dbReference>
<dbReference type="PANTHER" id="PTHR43300">
    <property type="entry name" value="ACETYLTRANSFERASE"/>
    <property type="match status" value="1"/>
</dbReference>
<dbReference type="Pfam" id="PF08503">
    <property type="entry name" value="DapH_N"/>
    <property type="match status" value="1"/>
</dbReference>
<dbReference type="Pfam" id="PF14602">
    <property type="entry name" value="Hexapep_2"/>
    <property type="match status" value="2"/>
</dbReference>
<dbReference type="SUPFAM" id="SSF51161">
    <property type="entry name" value="Trimeric LpxA-like enzymes"/>
    <property type="match status" value="1"/>
</dbReference>
<dbReference type="PROSITE" id="PS00101">
    <property type="entry name" value="HEXAPEP_TRANSFERASES"/>
    <property type="match status" value="1"/>
</dbReference>
<proteinExistence type="inferred from homology"/>
<name>DAPH_CLOPE</name>
<comment type="function">
    <text evidence="1">Catalyzes the transfer of an acetyl group from acetyl-CoA to tetrahydrodipicolinate.</text>
</comment>
<comment type="catalytic activity">
    <reaction evidence="1">
        <text>(S)-2,3,4,5-tetrahydrodipicolinate + acetyl-CoA + H2O = L-2-acetamido-6-oxoheptanedioate + CoA</text>
        <dbReference type="Rhea" id="RHEA:13085"/>
        <dbReference type="ChEBI" id="CHEBI:15377"/>
        <dbReference type="ChEBI" id="CHEBI:16845"/>
        <dbReference type="ChEBI" id="CHEBI:57287"/>
        <dbReference type="ChEBI" id="CHEBI:57288"/>
        <dbReference type="ChEBI" id="CHEBI:58117"/>
        <dbReference type="EC" id="2.3.1.89"/>
    </reaction>
</comment>
<comment type="pathway">
    <text evidence="1">Amino-acid biosynthesis; L-lysine biosynthesis via DAP pathway; LL-2,6-diaminopimelate from (S)-tetrahydrodipicolinate (acetylase route): step 1/3.</text>
</comment>
<comment type="similarity">
    <text evidence="1">Belongs to the transferase hexapeptide repeat family. DapH subfamily.</text>
</comment>
<accession>Q8XJ52</accession>
<reference key="1">
    <citation type="journal article" date="2002" name="Proc. Natl. Acad. Sci. U.S.A.">
        <title>Complete genome sequence of Clostridium perfringens, an anaerobic flesh-eater.</title>
        <authorList>
            <person name="Shimizu T."/>
            <person name="Ohtani K."/>
            <person name="Hirakawa H."/>
            <person name="Ohshima K."/>
            <person name="Yamashita A."/>
            <person name="Shiba T."/>
            <person name="Ogasawara N."/>
            <person name="Hattori M."/>
            <person name="Kuhara S."/>
            <person name="Hayashi H."/>
        </authorList>
    </citation>
    <scope>NUCLEOTIDE SEQUENCE [LARGE SCALE GENOMIC DNA]</scope>
    <source>
        <strain>13 / Type A</strain>
    </source>
</reference>
<feature type="chain" id="PRO_0000376653" description="2,3,4,5-tetrahydropyridine-2,6-dicarboxylate N-acetyltransferase">
    <location>
        <begin position="1"/>
        <end position="236"/>
    </location>
</feature>
<protein>
    <recommendedName>
        <fullName evidence="1">2,3,4,5-tetrahydropyridine-2,6-dicarboxylate N-acetyltransferase</fullName>
        <ecNumber evidence="1">2.3.1.89</ecNumber>
    </recommendedName>
    <alternativeName>
        <fullName evidence="1">Tetrahydrodipicolinate N-acetyltransferase</fullName>
        <shortName evidence="1">THP acetyltransferase</shortName>
        <shortName evidence="1">Tetrahydropicolinate acetylase</shortName>
    </alternativeName>
</protein>
<sequence>MSYNFTDPYEIARFIKEVKKSTPVKVYLKGNLEGVELGSIECYGNNDFYVLFGESDEVATFLTENKDKIVSFRLENDRRNSAIPMLDLLNINARIEPGAIIRDRVSIGDNAVIMMGAVINIGAEIGESTMVDMNAVIGARGKLGKRVHLGAGAVVAGVLEPPSKTPCIIEDDVLIGANAVILEGVKIGKGSVVAAGSVVVEDVPAGVVVAGTPAKIIKSVDEKTKDKTEILDDLRK</sequence>
<evidence type="ECO:0000255" key="1">
    <source>
        <dbReference type="HAMAP-Rule" id="MF_01691"/>
    </source>
</evidence>
<organism>
    <name type="scientific">Clostridium perfringens (strain 13 / Type A)</name>
    <dbReference type="NCBI Taxonomy" id="195102"/>
    <lineage>
        <taxon>Bacteria</taxon>
        <taxon>Bacillati</taxon>
        <taxon>Bacillota</taxon>
        <taxon>Clostridia</taxon>
        <taxon>Eubacteriales</taxon>
        <taxon>Clostridiaceae</taxon>
        <taxon>Clostridium</taxon>
    </lineage>
</organism>
<gene>
    <name evidence="1" type="primary">dapH</name>
    <name type="ordered locus">CPE1909</name>
</gene>